<proteinExistence type="evidence at transcript level"/>
<dbReference type="EMBL" id="M17450">
    <property type="protein sequence ID" value="AAA45059.1"/>
    <property type="molecule type" value="Genomic_RNA"/>
</dbReference>
<dbReference type="SMR" id="P05899"/>
<dbReference type="GO" id="GO:0030430">
    <property type="term" value="C:host cell cytoplasm"/>
    <property type="evidence" value="ECO:0007669"/>
    <property type="project" value="UniProtKB-SubCell"/>
</dbReference>
<dbReference type="GO" id="GO:0020002">
    <property type="term" value="C:host cell plasma membrane"/>
    <property type="evidence" value="ECO:0007669"/>
    <property type="project" value="UniProtKB-SubCell"/>
</dbReference>
<dbReference type="GO" id="GO:0016020">
    <property type="term" value="C:membrane"/>
    <property type="evidence" value="ECO:0007669"/>
    <property type="project" value="UniProtKB-KW"/>
</dbReference>
<dbReference type="GO" id="GO:0044423">
    <property type="term" value="C:virion component"/>
    <property type="evidence" value="ECO:0007669"/>
    <property type="project" value="UniProtKB-KW"/>
</dbReference>
<dbReference type="GO" id="GO:0046872">
    <property type="term" value="F:metal ion binding"/>
    <property type="evidence" value="ECO:0007669"/>
    <property type="project" value="UniProtKB-KW"/>
</dbReference>
<dbReference type="GO" id="GO:0003723">
    <property type="term" value="F:RNA binding"/>
    <property type="evidence" value="ECO:0007669"/>
    <property type="project" value="UniProtKB-KW"/>
</dbReference>
<dbReference type="GO" id="GO:0019058">
    <property type="term" value="P:viral life cycle"/>
    <property type="evidence" value="ECO:0007669"/>
    <property type="project" value="InterPro"/>
</dbReference>
<dbReference type="InterPro" id="IPR000475">
    <property type="entry name" value="Vif"/>
</dbReference>
<dbReference type="Pfam" id="PF00559">
    <property type="entry name" value="Vif"/>
    <property type="match status" value="1"/>
</dbReference>
<dbReference type="PRINTS" id="PR00349">
    <property type="entry name" value="VIRIONINFFCT"/>
</dbReference>
<comment type="function">
    <text evidence="4">Counteracts the innate antiviral activity of host APOBEC3F and APOBEC3G by promoting their ubiquitination and degradation. Acts as a substrate recognition component of an E3 ubiquitin-protein ligase complex: mechanistically, Vif hijacks a host cullin-5-RING E3 ubiquitin-protein ligase complex (ECS complex) and the transcription coactivator CBFB/CBF-beta to form an active E3 ubiquitin-protein ligase complex that targets APOBEC3G and APOBEC3F for polyubiquitination, leading to their degradation by the proteasome. Vif interaction with APOBEC3G also blocks its cytidine deaminase activity in a proteasome-independent manner, suggesting a dual inhibitory mechanism. May interact directly with APOBEC3G mRNA in order to inhibit its translation. Association with CBFB/CBF-beta also inhibits the transcription coactivator activity of CBFB/CBF-beta. Seems to play a role in viral morphology by affecting the stability of the viral nucleoprotein core. Finally, Vif also contributes to the G2 cell cycle arrest observed in HIV infected cells.</text>
</comment>
<comment type="subunit">
    <text evidence="2">Homomultimer; in vitro and presumably in vivo. Interacts with viral RNA and Pr55Gag precursor; these interactions mediate Vif incorporation into the virion. Interacts with the viral reverse transcriptase. Forms cullin-5-RING E3 ubiquitin-protein ligase complex (ECS complex) by interacting with host CUL5, RBX2, elongin BC complex (ELOB and ELOC) and CBFB/CBF-beta. Within the ECS complex, Vif interacts directly with host CUL5, ELOC and APOBEC (APOBEC3F and APOBEC3G) substrates. The ECS complex also contains some single-stranded RNA (ssRNA) that acts as a glue that bridges Vif with APOBEC (APOBEC3F and APOBEC3G) substrates. Interacts with host UBCE7IP1 isoform 3/ZIN and possibly with SAT. Interacts with host tyrosine kinases HCK and FYN; these interactions may decrease level of phosphorylated APOBEC3G incorporation into virions. Interacts with host ABCE1; this interaction may play a role in protecting viral RNA from damage during viral assembly. Interacts with host MDM2; this interaction targets Vif for degradation by the proteasome.</text>
</comment>
<comment type="subcellular location">
    <subcellularLocation>
        <location evidence="1">Host cytoplasm</location>
    </subcellularLocation>
    <subcellularLocation>
        <location evidence="1">Host cell membrane</location>
        <topology evidence="1">Peripheral membrane protein</topology>
        <orientation evidence="1">Cytoplasmic side</orientation>
    </subcellularLocation>
    <subcellularLocation>
        <location evidence="1">Virion</location>
    </subcellularLocation>
    <text evidence="1">In the cytoplasm, seems to colocalize with intermediate filament vimentin. A fraction is associated with the cytoplasmic side of cellular membranes, presumably via the interaction with Pr55Gag precursor. Incorporated in virions at a ratio of approximately 7 to 20 molecules per virion (By similarity).</text>
</comment>
<comment type="induction">
    <text>Expressed late during infection in a Rev-dependent manner.</text>
</comment>
<comment type="domain">
    <text evidence="1">The BC-like-box motif mediates the interaction with elongin BC complex.</text>
</comment>
<comment type="domain">
    <text evidence="1">The HCCH motif (H-x(5)-C-x(18)-C-x(5)-H) mediates the interaction with CUL5.</text>
</comment>
<comment type="PTM">
    <text evidence="1">Processed in virion by the viral protease.</text>
</comment>
<comment type="PTM">
    <text evidence="1">Highly phosphorylated on serine and threonine residues. Thr-13 and Ser-82 are phosphorylated by the mitogen activated kinase MAP4K1. As the HIV-1 replication can be activated by stress and mitogens, these phosphorylations could be involved in this process. Ser-61 phosphorylation may inhibit elongin BC complex binding (By similarity).</text>
</comment>
<comment type="PTM">
    <text evidence="1">Polyubiquitinated and degraded by the proteasome in the presence of APOBEC3G.</text>
</comment>
<comment type="miscellaneous">
    <text evidence="1">Required for replication in 'nonpermissive' cells, including primary T-cells, macrophages and certain T-cell lines, but is dispensable for replication in 'permissive' cell lines, such as 293T cells. In nonpermissive cells, Vif-defective viruses can produce virions, but they fail to complete reverse transcription and cannot successfully infect new cells (By similarity).</text>
</comment>
<comment type="miscellaneous">
    <text evidence="1">Vif-defective viruses show catastrophic failure in reverse transcription due to APOBEC-induced mutations that initiate a DNA base repair pathway and compromise the structural integrity of the ssDNA. In the absence of Vif, the virion is morphologically abnormal (By similarity).</text>
</comment>
<comment type="miscellaneous">
    <text>HIV-1 lineages are divided in three main groups, M (for Major), O (for Outlier), and N (for New, or Non-M, Non-O). The vast majority of strains found worldwide belong to the group M. Group O seems to be endemic to and largely confined to Cameroon and neighboring countries in West Central Africa, where these viruses represent a small minority of HIV-1 strains. The group N is represented by a limited number of isolates from Cameroonian persons. The group M is further subdivided in 9 clades or subtypes (A to D, F to H, J and K).</text>
</comment>
<comment type="miscellaneous">
    <text>The SC isolate was taken from an ARC patient in 1984 in Southern California.</text>
</comment>
<comment type="similarity">
    <text evidence="6">Belongs to the primate lentivirus group Vif protein family.</text>
</comment>
<organism>
    <name type="scientific">Human immunodeficiency virus type 1 group M subtype B (isolate SC)</name>
    <name type="common">HIV-1</name>
    <dbReference type="NCBI Taxonomy" id="11702"/>
    <lineage>
        <taxon>Viruses</taxon>
        <taxon>Riboviria</taxon>
        <taxon>Pararnavirae</taxon>
        <taxon>Artverviricota</taxon>
        <taxon>Revtraviricetes</taxon>
        <taxon>Ortervirales</taxon>
        <taxon>Retroviridae</taxon>
        <taxon>Orthoretrovirinae</taxon>
        <taxon>Lentivirus</taxon>
        <taxon>Human immunodeficiency virus type 1</taxon>
    </lineage>
</organism>
<keyword id="KW-0014">AIDS</keyword>
<keyword id="KW-1032">Host cell membrane</keyword>
<keyword id="KW-1035">Host cytoplasm</keyword>
<keyword id="KW-1043">Host membrane</keyword>
<keyword id="KW-0945">Host-virus interaction</keyword>
<keyword id="KW-0472">Membrane</keyword>
<keyword id="KW-0479">Metal-binding</keyword>
<keyword id="KW-0597">Phosphoprotein</keyword>
<keyword id="KW-0694">RNA-binding</keyword>
<keyword id="KW-0832">Ubl conjugation</keyword>
<keyword id="KW-0833">Ubl conjugation pathway</keyword>
<keyword id="KW-0946">Virion</keyword>
<keyword id="KW-0862">Zinc</keyword>
<gene>
    <name type="primary">vif</name>
</gene>
<sequence>GVSIEWTKKRYSTQVDPDLADRLIHLYYFDCFSESAIRNAILGALVSGRCEYQAGHNKVGSLQYLALTALITPKKTKPPLPSVRKLTEDRWNKPQKTKGHRGSHTMNGH</sequence>
<protein>
    <recommendedName>
        <fullName>Virion infectivity factor</fullName>
        <shortName>Vif</shortName>
    </recommendedName>
    <alternativeName>
        <fullName>SOR protein</fullName>
    </alternativeName>
    <component>
        <recommendedName>
            <fullName>p17</fullName>
        </recommendedName>
    </component>
    <component>
        <recommendedName>
            <fullName>p7</fullName>
        </recommendedName>
    </component>
</protein>
<organismHost>
    <name type="scientific">Homo sapiens</name>
    <name type="common">Human</name>
    <dbReference type="NCBI Taxonomy" id="9606"/>
</organismHost>
<feature type="chain" id="PRO_0000085315" description="Virion infectivity factor">
    <location>
        <begin position="1" status="less than"/>
        <end position="109"/>
    </location>
</feature>
<feature type="chain" id="PRO_0000297502" description="p17" evidence="1">
    <location>
        <begin position="1" status="less than"/>
        <end position="67"/>
    </location>
</feature>
<feature type="chain" id="PRO_0000297503" description="p7" evidence="1">
    <location>
        <begin position="68"/>
        <end position="109"/>
    </location>
</feature>
<feature type="region of interest" description="RNA-binding" evidence="3">
    <location>
        <begin position="1" status="less than"/>
        <end position="31"/>
    </location>
</feature>
<feature type="region of interest" description="SOCS box-like" evidence="4">
    <location>
        <begin position="68"/>
        <end position="97"/>
    </location>
</feature>
<feature type="region of interest" description="Multimerization" evidence="1">
    <location>
        <begin position="68"/>
        <end position="81"/>
    </location>
</feature>
<feature type="region of interest" description="Disordered" evidence="5">
    <location>
        <begin position="75"/>
        <end position="109"/>
    </location>
</feature>
<feature type="region of interest" description="Membrane association" evidence="1">
    <location>
        <begin position="88"/>
        <end position="89"/>
    </location>
</feature>
<feature type="short sequence motif" description="HCCH motif" evidence="1">
    <location>
        <begin position="25"/>
        <end position="56"/>
    </location>
</feature>
<feature type="short sequence motif" description="BC-box-like motif" evidence="1">
    <location>
        <begin position="61"/>
        <end position="70"/>
    </location>
</feature>
<feature type="compositionally biased region" description="Basic residues" evidence="5">
    <location>
        <begin position="93"/>
        <end position="103"/>
    </location>
</feature>
<feature type="binding site" evidence="4">
    <location>
        <position position="25"/>
    </location>
    <ligand>
        <name>Zn(2+)</name>
        <dbReference type="ChEBI" id="CHEBI:29105"/>
    </ligand>
</feature>
<feature type="binding site" evidence="4">
    <location>
        <position position="31"/>
    </location>
    <ligand>
        <name>Zn(2+)</name>
        <dbReference type="ChEBI" id="CHEBI:29105"/>
    </ligand>
</feature>
<feature type="binding site" evidence="4">
    <location>
        <position position="50"/>
    </location>
    <ligand>
        <name>Zn(2+)</name>
        <dbReference type="ChEBI" id="CHEBI:29105"/>
    </ligand>
</feature>
<feature type="binding site" evidence="4">
    <location>
        <position position="56"/>
    </location>
    <ligand>
        <name>Zn(2+)</name>
        <dbReference type="ChEBI" id="CHEBI:29105"/>
    </ligand>
</feature>
<feature type="site" description="Cleavage in virion (by viral protease)" evidence="1">
    <location>
        <begin position="67"/>
        <end position="68"/>
    </location>
</feature>
<feature type="modified residue" description="Phosphothreonine; by host MAP4K1" evidence="1">
    <location>
        <position position="13"/>
    </location>
</feature>
<feature type="modified residue" description="Phosphoserine; by host" evidence="1">
    <location>
        <position position="61"/>
    </location>
</feature>
<feature type="modified residue" description="Phosphoserine; by host MAP4K1" evidence="1">
    <location>
        <position position="82"/>
    </location>
</feature>
<feature type="modified residue" description="Phosphothreonine; by host" evidence="1">
    <location>
        <position position="105"/>
    </location>
</feature>
<feature type="non-terminal residue">
    <location>
        <position position="1"/>
    </location>
</feature>
<accession>P05899</accession>
<evidence type="ECO:0000250" key="1"/>
<evidence type="ECO:0000250" key="2">
    <source>
        <dbReference type="UniProtKB" id="O70897"/>
    </source>
</evidence>
<evidence type="ECO:0000255" key="3"/>
<evidence type="ECO:0000255" key="4">
    <source>
        <dbReference type="HAMAP-Rule" id="MF_04081"/>
    </source>
</evidence>
<evidence type="ECO:0000256" key="5">
    <source>
        <dbReference type="SAM" id="MobiDB-lite"/>
    </source>
</evidence>
<evidence type="ECO:0000305" key="6"/>
<name>VIF_HV1SC</name>
<reference key="1">
    <citation type="journal article" date="1988" name="Virology">
        <title>Envelope sequences of two new United States HIV-1 isolates.</title>
        <authorList>
            <person name="Gurgo C."/>
            <person name="Guo H.-G."/>
            <person name="Franchini G."/>
            <person name="Aldovini A."/>
            <person name="Collalti E."/>
            <person name="Farrell K."/>
            <person name="Wong-Staal F."/>
            <person name="Gallo R.C."/>
            <person name="Reitz M.S. Jr."/>
        </authorList>
    </citation>
    <scope>NUCLEOTIDE SEQUENCE [GENOMIC RNA]</scope>
</reference>